<organism>
    <name type="scientific">Anabaena sp. (strain L31)</name>
    <dbReference type="NCBI Taxonomy" id="29412"/>
    <lineage>
        <taxon>Bacteria</taxon>
        <taxon>Bacillati</taxon>
        <taxon>Cyanobacteriota</taxon>
        <taxon>Cyanophyceae</taxon>
        <taxon>Nostocales</taxon>
        <taxon>Nostocaceae</taxon>
        <taxon>Anabaena</taxon>
    </lineage>
</organism>
<reference evidence="3" key="1">
    <citation type="submission" date="2001-10" db="UniProtKB">
        <authorList>
            <person name="Apte S.K."/>
            <person name="Uhlemann E."/>
            <person name="Schmid R."/>
            <person name="Altendorf K."/>
        </authorList>
    </citation>
    <scope>PROTEIN SEQUENCE</scope>
</reference>
<feature type="chain" id="PRO_0000262937" description="Putative RNA-binding protein RbpA">
    <location>
        <begin position="1"/>
        <end position="10" status="greater than"/>
    </location>
</feature>
<feature type="domain" description="RRM" evidence="2">
    <location>
        <begin position="1"/>
        <end position="10" status="greater than"/>
    </location>
</feature>
<feature type="non-terminal residue">
    <location>
        <position position="10"/>
    </location>
</feature>
<proteinExistence type="evidence at protein level"/>
<gene>
    <name evidence="1" type="primary">rbpA</name>
</gene>
<evidence type="ECO:0000250" key="1">
    <source>
        <dbReference type="UniProtKB" id="Q57014"/>
    </source>
</evidence>
<evidence type="ECO:0000255" key="2">
    <source>
        <dbReference type="PROSITE-ProRule" id="PRU00176"/>
    </source>
</evidence>
<evidence type="ECO:0000305" key="3"/>
<keyword id="KW-0903">Direct protein sequencing</keyword>
<keyword id="KW-0694">RNA-binding</keyword>
<name>RBPA_ANASL</name>
<dbReference type="GO" id="GO:0003723">
    <property type="term" value="F:RNA binding"/>
    <property type="evidence" value="ECO:0007669"/>
    <property type="project" value="UniProtKB-KW"/>
</dbReference>
<sequence length="10" mass="1130">SIYVGNLSYD</sequence>
<protein>
    <recommendedName>
        <fullName>Putative RNA-binding protein RbpA</fullName>
    </recommendedName>
</protein>
<accession>P83161</accession>